<name>PP213_ARATH</name>
<reference key="1">
    <citation type="journal article" date="2000" name="Nature">
        <title>Sequence and analysis of chromosome 3 of the plant Arabidopsis thaliana.</title>
        <authorList>
            <person name="Salanoubat M."/>
            <person name="Lemcke K."/>
            <person name="Rieger M."/>
            <person name="Ansorge W."/>
            <person name="Unseld M."/>
            <person name="Fartmann B."/>
            <person name="Valle G."/>
            <person name="Bloecker H."/>
            <person name="Perez-Alonso M."/>
            <person name="Obermaier B."/>
            <person name="Delseny M."/>
            <person name="Boutry M."/>
            <person name="Grivell L.A."/>
            <person name="Mache R."/>
            <person name="Puigdomenech P."/>
            <person name="De Simone V."/>
            <person name="Choisne N."/>
            <person name="Artiguenave F."/>
            <person name="Robert C."/>
            <person name="Brottier P."/>
            <person name="Wincker P."/>
            <person name="Cattolico L."/>
            <person name="Weissenbach J."/>
            <person name="Saurin W."/>
            <person name="Quetier F."/>
            <person name="Schaefer M."/>
            <person name="Mueller-Auer S."/>
            <person name="Gabel C."/>
            <person name="Fuchs M."/>
            <person name="Benes V."/>
            <person name="Wurmbach E."/>
            <person name="Drzonek H."/>
            <person name="Erfle H."/>
            <person name="Jordan N."/>
            <person name="Bangert S."/>
            <person name="Wiedelmann R."/>
            <person name="Kranz H."/>
            <person name="Voss H."/>
            <person name="Holland R."/>
            <person name="Brandt P."/>
            <person name="Nyakatura G."/>
            <person name="Vezzi A."/>
            <person name="D'Angelo M."/>
            <person name="Pallavicini A."/>
            <person name="Toppo S."/>
            <person name="Simionati B."/>
            <person name="Conrad A."/>
            <person name="Hornischer K."/>
            <person name="Kauer G."/>
            <person name="Loehnert T.-H."/>
            <person name="Nordsiek G."/>
            <person name="Reichelt J."/>
            <person name="Scharfe M."/>
            <person name="Schoen O."/>
            <person name="Bargues M."/>
            <person name="Terol J."/>
            <person name="Climent J."/>
            <person name="Navarro P."/>
            <person name="Collado C."/>
            <person name="Perez-Perez A."/>
            <person name="Ottenwaelder B."/>
            <person name="Duchemin D."/>
            <person name="Cooke R."/>
            <person name="Laudie M."/>
            <person name="Berger-Llauro C."/>
            <person name="Purnelle B."/>
            <person name="Masuy D."/>
            <person name="de Haan M."/>
            <person name="Maarse A.C."/>
            <person name="Alcaraz J.-P."/>
            <person name="Cottet A."/>
            <person name="Casacuberta E."/>
            <person name="Monfort A."/>
            <person name="Argiriou A."/>
            <person name="Flores M."/>
            <person name="Liguori R."/>
            <person name="Vitale D."/>
            <person name="Mannhaupt G."/>
            <person name="Haase D."/>
            <person name="Schoof H."/>
            <person name="Rudd S."/>
            <person name="Zaccaria P."/>
            <person name="Mewes H.-W."/>
            <person name="Mayer K.F.X."/>
            <person name="Kaul S."/>
            <person name="Town C.D."/>
            <person name="Koo H.L."/>
            <person name="Tallon L.J."/>
            <person name="Jenkins J."/>
            <person name="Rooney T."/>
            <person name="Rizzo M."/>
            <person name="Walts A."/>
            <person name="Utterback T."/>
            <person name="Fujii C.Y."/>
            <person name="Shea T.P."/>
            <person name="Creasy T.H."/>
            <person name="Haas B."/>
            <person name="Maiti R."/>
            <person name="Wu D."/>
            <person name="Peterson J."/>
            <person name="Van Aken S."/>
            <person name="Pai G."/>
            <person name="Militscher J."/>
            <person name="Sellers P."/>
            <person name="Gill J.E."/>
            <person name="Feldblyum T.V."/>
            <person name="Preuss D."/>
            <person name="Lin X."/>
            <person name="Nierman W.C."/>
            <person name="Salzberg S.L."/>
            <person name="White O."/>
            <person name="Venter J.C."/>
            <person name="Fraser C.M."/>
            <person name="Kaneko T."/>
            <person name="Nakamura Y."/>
            <person name="Sato S."/>
            <person name="Kato T."/>
            <person name="Asamizu E."/>
            <person name="Sasamoto S."/>
            <person name="Kimura T."/>
            <person name="Idesawa K."/>
            <person name="Kawashima K."/>
            <person name="Kishida Y."/>
            <person name="Kiyokawa C."/>
            <person name="Kohara M."/>
            <person name="Matsumoto M."/>
            <person name="Matsuno A."/>
            <person name="Muraki A."/>
            <person name="Nakayama S."/>
            <person name="Nakazaki N."/>
            <person name="Shinpo S."/>
            <person name="Takeuchi C."/>
            <person name="Wada T."/>
            <person name="Watanabe A."/>
            <person name="Yamada M."/>
            <person name="Yasuda M."/>
            <person name="Tabata S."/>
        </authorList>
    </citation>
    <scope>NUCLEOTIDE SEQUENCE [LARGE SCALE GENOMIC DNA]</scope>
    <source>
        <strain>cv. Columbia</strain>
    </source>
</reference>
<reference key="2">
    <citation type="journal article" date="2017" name="Plant J.">
        <title>Araport11: a complete reannotation of the Arabidopsis thaliana reference genome.</title>
        <authorList>
            <person name="Cheng C.Y."/>
            <person name="Krishnakumar V."/>
            <person name="Chan A.P."/>
            <person name="Thibaud-Nissen F."/>
            <person name="Schobel S."/>
            <person name="Town C.D."/>
        </authorList>
    </citation>
    <scope>GENOME REANNOTATION</scope>
    <source>
        <strain>cv. Columbia</strain>
    </source>
</reference>
<reference key="3">
    <citation type="journal article" date="2003" name="Science">
        <title>Empirical analysis of transcriptional activity in the Arabidopsis genome.</title>
        <authorList>
            <person name="Yamada K."/>
            <person name="Lim J."/>
            <person name="Dale J.M."/>
            <person name="Chen H."/>
            <person name="Shinn P."/>
            <person name="Palm C.J."/>
            <person name="Southwick A.M."/>
            <person name="Wu H.C."/>
            <person name="Kim C.J."/>
            <person name="Nguyen M."/>
            <person name="Pham P.K."/>
            <person name="Cheuk R.F."/>
            <person name="Karlin-Newmann G."/>
            <person name="Liu S.X."/>
            <person name="Lam B."/>
            <person name="Sakano H."/>
            <person name="Wu T."/>
            <person name="Yu G."/>
            <person name="Miranda M."/>
            <person name="Quach H.L."/>
            <person name="Tripp M."/>
            <person name="Chang C.H."/>
            <person name="Lee J.M."/>
            <person name="Toriumi M.J."/>
            <person name="Chan M.M."/>
            <person name="Tang C.C."/>
            <person name="Onodera C.S."/>
            <person name="Deng J.M."/>
            <person name="Akiyama K."/>
            <person name="Ansari Y."/>
            <person name="Arakawa T."/>
            <person name="Banh J."/>
            <person name="Banno F."/>
            <person name="Bowser L."/>
            <person name="Brooks S.Y."/>
            <person name="Carninci P."/>
            <person name="Chao Q."/>
            <person name="Choy N."/>
            <person name="Enju A."/>
            <person name="Goldsmith A.D."/>
            <person name="Gurjal M."/>
            <person name="Hansen N.F."/>
            <person name="Hayashizaki Y."/>
            <person name="Johnson-Hopson C."/>
            <person name="Hsuan V.W."/>
            <person name="Iida K."/>
            <person name="Karnes M."/>
            <person name="Khan S."/>
            <person name="Koesema E."/>
            <person name="Ishida J."/>
            <person name="Jiang P.X."/>
            <person name="Jones T."/>
            <person name="Kawai J."/>
            <person name="Kamiya A."/>
            <person name="Meyers C."/>
            <person name="Nakajima M."/>
            <person name="Narusaka M."/>
            <person name="Seki M."/>
            <person name="Sakurai T."/>
            <person name="Satou M."/>
            <person name="Tamse R."/>
            <person name="Vaysberg M."/>
            <person name="Wallender E.K."/>
            <person name="Wong C."/>
            <person name="Yamamura Y."/>
            <person name="Yuan S."/>
            <person name="Shinozaki K."/>
            <person name="Davis R.W."/>
            <person name="Theologis A."/>
            <person name="Ecker J.R."/>
        </authorList>
    </citation>
    <scope>NUCLEOTIDE SEQUENCE [LARGE SCALE MRNA]</scope>
    <source>
        <strain>cv. Columbia</strain>
    </source>
</reference>
<reference key="4">
    <citation type="submission" date="2005-03" db="EMBL/GenBank/DDBJ databases">
        <title>Large-scale analysis of RIKEN Arabidopsis full-length (RAFL) cDNAs.</title>
        <authorList>
            <person name="Totoki Y."/>
            <person name="Seki M."/>
            <person name="Ishida J."/>
            <person name="Nakajima M."/>
            <person name="Enju A."/>
            <person name="Kamiya A."/>
            <person name="Narusaka M."/>
            <person name="Shin-i T."/>
            <person name="Nakagawa M."/>
            <person name="Sakamoto N."/>
            <person name="Oishi K."/>
            <person name="Kohara Y."/>
            <person name="Kobayashi M."/>
            <person name="Toyoda A."/>
            <person name="Sakaki Y."/>
            <person name="Sakurai T."/>
            <person name="Iida K."/>
            <person name="Akiyama K."/>
            <person name="Satou M."/>
            <person name="Toyoda T."/>
            <person name="Konagaya A."/>
            <person name="Carninci P."/>
            <person name="Kawai J."/>
            <person name="Hayashizaki Y."/>
            <person name="Shinozaki K."/>
        </authorList>
    </citation>
    <scope>NUCLEOTIDE SEQUENCE [LARGE SCALE MRNA]</scope>
    <source>
        <strain>cv. Columbia</strain>
    </source>
</reference>
<reference key="5">
    <citation type="journal article" date="2004" name="Plant Cell">
        <title>Genome-wide analysis of Arabidopsis pentatricopeptide repeat proteins reveals their essential role in organelle biogenesis.</title>
        <authorList>
            <person name="Lurin C."/>
            <person name="Andres C."/>
            <person name="Aubourg S."/>
            <person name="Bellaoui M."/>
            <person name="Bitton F."/>
            <person name="Bruyere C."/>
            <person name="Caboche M."/>
            <person name="Debast C."/>
            <person name="Gualberto J."/>
            <person name="Hoffmann B."/>
            <person name="Lecharny A."/>
            <person name="Le Ret M."/>
            <person name="Martin-Magniette M.-L."/>
            <person name="Mireau H."/>
            <person name="Peeters N."/>
            <person name="Renou J.-P."/>
            <person name="Szurek B."/>
            <person name="Taconnat L."/>
            <person name="Small I."/>
        </authorList>
    </citation>
    <scope>GENE FAMILY</scope>
</reference>
<proteinExistence type="evidence at transcript level"/>
<evidence type="ECO:0000255" key="1"/>
<evidence type="ECO:0000256" key="2">
    <source>
        <dbReference type="SAM" id="MobiDB-lite"/>
    </source>
</evidence>
<evidence type="ECO:0000305" key="3"/>
<gene>
    <name type="ordered locus">At3g04760</name>
    <name type="ORF">F7O18.25</name>
</gene>
<accession>Q9SR00</accession>
<accession>Q56XV0</accession>
<organism>
    <name type="scientific">Arabidopsis thaliana</name>
    <name type="common">Mouse-ear cress</name>
    <dbReference type="NCBI Taxonomy" id="3702"/>
    <lineage>
        <taxon>Eukaryota</taxon>
        <taxon>Viridiplantae</taxon>
        <taxon>Streptophyta</taxon>
        <taxon>Embryophyta</taxon>
        <taxon>Tracheophyta</taxon>
        <taxon>Spermatophyta</taxon>
        <taxon>Magnoliopsida</taxon>
        <taxon>eudicotyledons</taxon>
        <taxon>Gunneridae</taxon>
        <taxon>Pentapetalae</taxon>
        <taxon>rosids</taxon>
        <taxon>malvids</taxon>
        <taxon>Brassicales</taxon>
        <taxon>Brassicaceae</taxon>
        <taxon>Camelineae</taxon>
        <taxon>Arabidopsis</taxon>
    </lineage>
</organism>
<protein>
    <recommendedName>
        <fullName>Pentatricopeptide repeat-containing protein At3g04760, chloroplastic</fullName>
    </recommendedName>
</protein>
<sequence>MTPLSSELVGFTIPFYSKTQKPYSNSSHGLLLSHNRSSLLTFSNSNPNNDNGRSFSSSGARNLQTTTTTDATLPTERRQQHSQSLGFRDTQMLKIFHRSCRSGNYIESLHLLETMVRKGYNPDVILCTKLIKGFFTLRNIPKAVRVMEILEKFGQPDVFAYNALINGFCKMNRIDDATRVLDRMRSKDFSPDTVTYNIMIGSLCSRGKLDLALKVLNQLLSDNCQPTVITYTILIEATMLEGGVDEALKLMDEMLSRGLKPDMFTYNTIIRGMCKEGMVDRAFEMVRNLELKGCEPDVISYNILLRALLNQGKWEEGEKLMTKMFSEKCDPNVVTYSILITTLCRDGKIEEAMNLLKLMKEKGLTPDAYSYDPLIAAFCREGRLDVAIEFLETMISDGCLPDIVNYNTVLATLCKNGKADQALEIFGKLGEVGCSPNSSSYNTMFSALWSSGDKIRALHMILEMMSNGIDPDEITYNSMISCLCREGMVDEAFELLVDMRSCEFHPSVVTYNIVLLGFCKAHRIEDAINVLESMVGNGCRPNETTYTVLIEGIGFAGYRAEAMELANDLVRIDAISEYSFKRLHRTFPLLNVLQRSSQTFGY</sequence>
<feature type="transit peptide" description="Chloroplast" evidence="1">
    <location>
        <begin position="1"/>
        <end position="78"/>
    </location>
</feature>
<feature type="chain" id="PRO_0000356072" description="Pentatricopeptide repeat-containing protein At3g04760, chloroplastic">
    <location>
        <begin position="79"/>
        <end position="602"/>
    </location>
</feature>
<feature type="repeat" description="PPR 1">
    <location>
        <begin position="88"/>
        <end position="122"/>
    </location>
</feature>
<feature type="repeat" description="PPR 2">
    <location>
        <begin position="123"/>
        <end position="153"/>
    </location>
</feature>
<feature type="repeat" description="PPR 3">
    <location>
        <begin position="157"/>
        <end position="191"/>
    </location>
</feature>
<feature type="repeat" description="PPR 4">
    <location>
        <begin position="192"/>
        <end position="226"/>
    </location>
</feature>
<feature type="repeat" description="PPR 5">
    <location>
        <begin position="227"/>
        <end position="261"/>
    </location>
</feature>
<feature type="repeat" description="PPR 6">
    <location>
        <begin position="262"/>
        <end position="296"/>
    </location>
</feature>
<feature type="repeat" description="PPR 7">
    <location>
        <begin position="297"/>
        <end position="331"/>
    </location>
</feature>
<feature type="repeat" description="PPR 8">
    <location>
        <begin position="332"/>
        <end position="366"/>
    </location>
</feature>
<feature type="repeat" description="PPR 9">
    <location>
        <begin position="367"/>
        <end position="401"/>
    </location>
</feature>
<feature type="repeat" description="PPR 10">
    <location>
        <begin position="402"/>
        <end position="436"/>
    </location>
</feature>
<feature type="repeat" description="PPR 11">
    <location>
        <begin position="437"/>
        <end position="471"/>
    </location>
</feature>
<feature type="repeat" description="PPR 12">
    <location>
        <begin position="472"/>
        <end position="506"/>
    </location>
</feature>
<feature type="repeat" description="PPR 13">
    <location>
        <begin position="507"/>
        <end position="541"/>
    </location>
</feature>
<feature type="repeat" description="PPR 14">
    <location>
        <begin position="542"/>
        <end position="576"/>
    </location>
</feature>
<feature type="region of interest" description="Disordered" evidence="2">
    <location>
        <begin position="42"/>
        <end position="85"/>
    </location>
</feature>
<feature type="compositionally biased region" description="Polar residues" evidence="2">
    <location>
        <begin position="42"/>
        <end position="64"/>
    </location>
</feature>
<feature type="compositionally biased region" description="Low complexity" evidence="2">
    <location>
        <begin position="65"/>
        <end position="74"/>
    </location>
</feature>
<feature type="sequence conflict" description="In Ref. 4; BAD95034." evidence="3" ref="4">
    <original>C</original>
    <variation>S</variation>
    <location>
        <position position="294"/>
    </location>
</feature>
<dbReference type="EMBL" id="AC011437">
    <property type="protein sequence ID" value="AAF04902.1"/>
    <property type="molecule type" value="Genomic_DNA"/>
</dbReference>
<dbReference type="EMBL" id="CP002686">
    <property type="protein sequence ID" value="AEE74132.1"/>
    <property type="molecule type" value="Genomic_DNA"/>
</dbReference>
<dbReference type="EMBL" id="AY056218">
    <property type="protein sequence ID" value="AAL07067.1"/>
    <property type="molecule type" value="mRNA"/>
</dbReference>
<dbReference type="EMBL" id="AY133775">
    <property type="protein sequence ID" value="AAM91709.1"/>
    <property type="molecule type" value="mRNA"/>
</dbReference>
<dbReference type="EMBL" id="AK221573">
    <property type="protein sequence ID" value="BAD95034.1"/>
    <property type="molecule type" value="mRNA"/>
</dbReference>
<dbReference type="RefSeq" id="NP_566237.1">
    <property type="nucleotide sequence ID" value="NM_111348.2"/>
</dbReference>
<dbReference type="SMR" id="Q9SR00"/>
<dbReference type="FunCoup" id="Q9SR00">
    <property type="interactions" value="945"/>
</dbReference>
<dbReference type="STRING" id="3702.Q9SR00"/>
<dbReference type="PaxDb" id="3702-AT3G04760.1"/>
<dbReference type="ProteomicsDB" id="249089"/>
<dbReference type="EnsemblPlants" id="AT3G04760.1">
    <property type="protein sequence ID" value="AT3G04760.1"/>
    <property type="gene ID" value="AT3G04760"/>
</dbReference>
<dbReference type="GeneID" id="819636"/>
<dbReference type="Gramene" id="AT3G04760.1">
    <property type="protein sequence ID" value="AT3G04760.1"/>
    <property type="gene ID" value="AT3G04760"/>
</dbReference>
<dbReference type="KEGG" id="ath:AT3G04760"/>
<dbReference type="Araport" id="AT3G04760"/>
<dbReference type="TAIR" id="AT3G04760"/>
<dbReference type="eggNOG" id="KOG4197">
    <property type="taxonomic scope" value="Eukaryota"/>
</dbReference>
<dbReference type="HOGENOM" id="CLU_002706_49_0_1"/>
<dbReference type="InParanoid" id="Q9SR00"/>
<dbReference type="OMA" id="MYTYNVI"/>
<dbReference type="OrthoDB" id="185373at2759"/>
<dbReference type="PhylomeDB" id="Q9SR00"/>
<dbReference type="PRO" id="PR:Q9SR00"/>
<dbReference type="Proteomes" id="UP000006548">
    <property type="component" value="Chromosome 3"/>
</dbReference>
<dbReference type="ExpressionAtlas" id="Q9SR00">
    <property type="expression patterns" value="baseline and differential"/>
</dbReference>
<dbReference type="GO" id="GO:0009507">
    <property type="term" value="C:chloroplast"/>
    <property type="evidence" value="ECO:0007669"/>
    <property type="project" value="UniProtKB-SubCell"/>
</dbReference>
<dbReference type="GO" id="GO:0003729">
    <property type="term" value="F:mRNA binding"/>
    <property type="evidence" value="ECO:0000314"/>
    <property type="project" value="TAIR"/>
</dbReference>
<dbReference type="FunFam" id="1.25.40.10:FF:001568">
    <property type="entry name" value="Pentatricopeptide repeat-containing protein At1g09900"/>
    <property type="match status" value="1"/>
</dbReference>
<dbReference type="Gene3D" id="1.25.40.10">
    <property type="entry name" value="Tetratricopeptide repeat domain"/>
    <property type="match status" value="5"/>
</dbReference>
<dbReference type="InterPro" id="IPR002885">
    <property type="entry name" value="Pentatricopeptide_rpt"/>
</dbReference>
<dbReference type="InterPro" id="IPR011990">
    <property type="entry name" value="TPR-like_helical_dom_sf"/>
</dbReference>
<dbReference type="NCBIfam" id="TIGR00756">
    <property type="entry name" value="PPR"/>
    <property type="match status" value="10"/>
</dbReference>
<dbReference type="PANTHER" id="PTHR47938:SF35">
    <property type="entry name" value="PENTATRICOPEPTIDE REPEAT-CONTAINING PROTEIN 4, MITOCHONDRIAL-RELATED"/>
    <property type="match status" value="1"/>
</dbReference>
<dbReference type="PANTHER" id="PTHR47938">
    <property type="entry name" value="RESPIRATORY COMPLEX I CHAPERONE (CIA84), PUTATIVE (AFU_ORTHOLOGUE AFUA_2G06020)-RELATED"/>
    <property type="match status" value="1"/>
</dbReference>
<dbReference type="Pfam" id="PF12854">
    <property type="entry name" value="PPR_1"/>
    <property type="match status" value="3"/>
</dbReference>
<dbReference type="Pfam" id="PF13041">
    <property type="entry name" value="PPR_2"/>
    <property type="match status" value="4"/>
</dbReference>
<dbReference type="SUPFAM" id="SSF48452">
    <property type="entry name" value="TPR-like"/>
    <property type="match status" value="1"/>
</dbReference>
<dbReference type="PROSITE" id="PS51375">
    <property type="entry name" value="PPR"/>
    <property type="match status" value="14"/>
</dbReference>
<keyword id="KW-0150">Chloroplast</keyword>
<keyword id="KW-0934">Plastid</keyword>
<keyword id="KW-1185">Reference proteome</keyword>
<keyword id="KW-0677">Repeat</keyword>
<keyword id="KW-0809">Transit peptide</keyword>
<comment type="subcellular location">
    <subcellularLocation>
        <location evidence="3">Plastid</location>
        <location evidence="3">Chloroplast</location>
    </subcellularLocation>
</comment>
<comment type="similarity">
    <text evidence="3">Belongs to the PPR family. P subfamily.</text>
</comment>
<comment type="online information" name="Pentatricopeptide repeat proteins">
    <link uri="https://ppr.plantenergy.uwa.edu.au"/>
</comment>